<sequence length="931" mass="105010">MEGDAPQRVSERVSGPGPGGGGGGMIRELCRGFGRHRRYLGQLRQNLRETQKFFRDIKCSHSHSCPSSPAGGGAAELGPAGDVAEAPLPAGQLSCIAFPPKEEKYLQQIVDCLPCILILGQDCNVKCQLLNLLLGVQVLPTTRLGSEENCKLRRLRFTYGTQTRVSLALPGQYELVHTLVAHQGNWDTIPEEDLEVQEDSEDAAHVLAELEVTMHHALLQDVDIVVAPCQGLRPAVDVLGDLVNDFLPVITYALHKDELSERDEQELQEIRKYFSFPIFFFKVPKLGSEIIASSTRRTENERSPLHHQLMDLGYLSSSHCNCGVPGQDTKAQSMLVEQSEKLRHLSTFSHQVLQTHLVDAAKALNRVHCHCLDIFINQAFDMQRDLQITPKRLEYTRKKENELYESLMNIANRKQEEMKDMICETLNTMKGELLDDAANMEFKDVIVPENGEAVGTRELKCCIRQIQELIISRLNQAVANKLISSVDYLRESFVGTLERCLQSLEKSQDVSIHITSNYLKQILNAAYHVEVTFHSGSSVTRMLWEQIKQIIQRITWVNPPTITLEWKRKVAQEAIDSLSASKLAKSICSQFRTRLNSSHEAFAASLRQLEAGHSGRLENTEDLWLKVRKDHAPRLARLSLESRSLQDVLLHRKPKLGQELGRGQYGVVYLCDNWGGHFPCALKSVVPPDEKHWNDLALEFHYMRSLPKHERLVDLHGSVIDYNYGGGSSIAVLLIMERLHRDLYTGLKAGLTLETRLQIALDVVEGIRFLHSQGLVHRDIKLKNVLLDKQNRAKITDLGFCKPEAMMSGSIVGTPIHMAPELFTGKYDNSVDVYAFGILFWYICSGSVKLPEAFERCASKDHLWNNVRRGARPERLPVFDEECWQLMEACWDGDPSQRPLLGIVQPMLQGIMERLCKSNSERPNTGLDDST</sequence>
<accession>Q4VSN4</accession>
<gene>
    <name type="primary">DSTYK</name>
    <name type="synonym">RIPK5</name>
</gene>
<dbReference type="EC" id="2.7.12.1"/>
<dbReference type="EMBL" id="AY641093">
    <property type="protein sequence ID" value="AAV40859.1"/>
    <property type="molecule type" value="mRNA"/>
</dbReference>
<dbReference type="RefSeq" id="NP_001020439.1">
    <property type="nucleotide sequence ID" value="NM_001025268.1"/>
</dbReference>
<dbReference type="SMR" id="Q4VSN4"/>
<dbReference type="FunCoup" id="Q4VSN4">
    <property type="interactions" value="758"/>
</dbReference>
<dbReference type="STRING" id="9615.ENSCAFP00000014726"/>
<dbReference type="PaxDb" id="9612-ENSCAFP00000014726"/>
<dbReference type="GeneID" id="478942"/>
<dbReference type="KEGG" id="cfa:478942"/>
<dbReference type="CTD" id="25778"/>
<dbReference type="eggNOG" id="KOG0192">
    <property type="taxonomic scope" value="Eukaryota"/>
</dbReference>
<dbReference type="InParanoid" id="Q4VSN4"/>
<dbReference type="OrthoDB" id="122279at2759"/>
<dbReference type="Proteomes" id="UP000002254">
    <property type="component" value="Unplaced"/>
</dbReference>
<dbReference type="Proteomes" id="UP000694429">
    <property type="component" value="Unplaced"/>
</dbReference>
<dbReference type="Proteomes" id="UP000694542">
    <property type="component" value="Unplaced"/>
</dbReference>
<dbReference type="Proteomes" id="UP000805418">
    <property type="component" value="Unplaced"/>
</dbReference>
<dbReference type="GO" id="GO:0070161">
    <property type="term" value="C:anchoring junction"/>
    <property type="evidence" value="ECO:0007669"/>
    <property type="project" value="UniProtKB-SubCell"/>
</dbReference>
<dbReference type="GO" id="GO:0016324">
    <property type="term" value="C:apical plasma membrane"/>
    <property type="evidence" value="ECO:0000250"/>
    <property type="project" value="UniProtKB"/>
</dbReference>
<dbReference type="GO" id="GO:0016323">
    <property type="term" value="C:basolateral plasma membrane"/>
    <property type="evidence" value="ECO:0000250"/>
    <property type="project" value="UniProtKB"/>
</dbReference>
<dbReference type="GO" id="GO:0005737">
    <property type="term" value="C:cytoplasm"/>
    <property type="evidence" value="ECO:0000250"/>
    <property type="project" value="UniProtKB"/>
</dbReference>
<dbReference type="GO" id="GO:0005524">
    <property type="term" value="F:ATP binding"/>
    <property type="evidence" value="ECO:0007669"/>
    <property type="project" value="UniProtKB-KW"/>
</dbReference>
<dbReference type="GO" id="GO:0106310">
    <property type="term" value="F:protein serine kinase activity"/>
    <property type="evidence" value="ECO:0007669"/>
    <property type="project" value="RHEA"/>
</dbReference>
<dbReference type="GO" id="GO:0004674">
    <property type="term" value="F:protein serine/threonine kinase activity"/>
    <property type="evidence" value="ECO:0007669"/>
    <property type="project" value="UniProtKB-KW"/>
</dbReference>
<dbReference type="GO" id="GO:0004712">
    <property type="term" value="F:protein serine/threonine/tyrosine kinase activity"/>
    <property type="evidence" value="ECO:0007669"/>
    <property type="project" value="UniProtKB-EC"/>
</dbReference>
<dbReference type="GO" id="GO:0004713">
    <property type="term" value="F:protein tyrosine kinase activity"/>
    <property type="evidence" value="ECO:0007669"/>
    <property type="project" value="UniProtKB-KW"/>
</dbReference>
<dbReference type="GO" id="GO:0044344">
    <property type="term" value="P:cellular response to fibroblast growth factor stimulus"/>
    <property type="evidence" value="ECO:0000250"/>
    <property type="project" value="UniProtKB"/>
</dbReference>
<dbReference type="GO" id="GO:0043066">
    <property type="term" value="P:negative regulation of apoptotic process"/>
    <property type="evidence" value="ECO:0000250"/>
    <property type="project" value="UniProtKB"/>
</dbReference>
<dbReference type="GO" id="GO:0070374">
    <property type="term" value="P:positive regulation of ERK1 and ERK2 cascade"/>
    <property type="evidence" value="ECO:0000250"/>
    <property type="project" value="UniProtKB"/>
</dbReference>
<dbReference type="GO" id="GO:0045743">
    <property type="term" value="P:positive regulation of fibroblast growth factor receptor signaling pathway"/>
    <property type="evidence" value="ECO:0000250"/>
    <property type="project" value="UniProtKB"/>
</dbReference>
<dbReference type="GO" id="GO:0033674">
    <property type="term" value="P:positive regulation of kinase activity"/>
    <property type="evidence" value="ECO:0000250"/>
    <property type="project" value="UniProtKB"/>
</dbReference>
<dbReference type="CDD" id="cd13975">
    <property type="entry name" value="PKc_Dusty"/>
    <property type="match status" value="1"/>
</dbReference>
<dbReference type="FunFam" id="1.10.510.10:FF:000244">
    <property type="entry name" value="Dual serine/threonine and tyrosine protein kinase"/>
    <property type="match status" value="1"/>
</dbReference>
<dbReference type="Gene3D" id="1.10.510.10">
    <property type="entry name" value="Transferase(Phosphotransferase) domain 1"/>
    <property type="match status" value="1"/>
</dbReference>
<dbReference type="InterPro" id="IPR051302">
    <property type="entry name" value="Dual_SerThr-Tyr_Kinase"/>
</dbReference>
<dbReference type="InterPro" id="IPR011009">
    <property type="entry name" value="Kinase-like_dom_sf"/>
</dbReference>
<dbReference type="InterPro" id="IPR000719">
    <property type="entry name" value="Prot_kinase_dom"/>
</dbReference>
<dbReference type="InterPro" id="IPR017441">
    <property type="entry name" value="Protein_kinase_ATP_BS"/>
</dbReference>
<dbReference type="InterPro" id="IPR008271">
    <property type="entry name" value="Ser/Thr_kinase_AS"/>
</dbReference>
<dbReference type="PANTHER" id="PTHR46392">
    <property type="entry name" value="DUAL SERINE/THREONINE AND TYROSINE PROTEIN KINASE"/>
    <property type="match status" value="1"/>
</dbReference>
<dbReference type="PANTHER" id="PTHR46392:SF1">
    <property type="entry name" value="DUAL SERINE_THREONINE AND TYROSINE PROTEIN KINASE"/>
    <property type="match status" value="1"/>
</dbReference>
<dbReference type="Pfam" id="PF00069">
    <property type="entry name" value="Pkinase"/>
    <property type="match status" value="1"/>
</dbReference>
<dbReference type="SMART" id="SM00220">
    <property type="entry name" value="S_TKc"/>
    <property type="match status" value="1"/>
</dbReference>
<dbReference type="SUPFAM" id="SSF56112">
    <property type="entry name" value="Protein kinase-like (PK-like)"/>
    <property type="match status" value="1"/>
</dbReference>
<dbReference type="PROSITE" id="PS00107">
    <property type="entry name" value="PROTEIN_KINASE_ATP"/>
    <property type="match status" value="1"/>
</dbReference>
<dbReference type="PROSITE" id="PS50011">
    <property type="entry name" value="PROTEIN_KINASE_DOM"/>
    <property type="match status" value="1"/>
</dbReference>
<dbReference type="PROSITE" id="PS00108">
    <property type="entry name" value="PROTEIN_KINASE_ST"/>
    <property type="match status" value="1"/>
</dbReference>
<keyword id="KW-0067">ATP-binding</keyword>
<keyword id="KW-0965">Cell junction</keyword>
<keyword id="KW-1003">Cell membrane</keyword>
<keyword id="KW-0175">Coiled coil</keyword>
<keyword id="KW-0963">Cytoplasm</keyword>
<keyword id="KW-0418">Kinase</keyword>
<keyword id="KW-0472">Membrane</keyword>
<keyword id="KW-0547">Nucleotide-binding</keyword>
<keyword id="KW-1185">Reference proteome</keyword>
<keyword id="KW-0723">Serine/threonine-protein kinase</keyword>
<keyword id="KW-0808">Transferase</keyword>
<keyword id="KW-0829">Tyrosine-protein kinase</keyword>
<name>DUSTY_CANLF</name>
<comment type="function">
    <text evidence="2">Acts as a positive regulator of ERK phosphorylation downstream of fibroblast growth factor-receptor activation. Involved in the regulation of both caspase-dependent apoptosis and caspase-independent cell death. In the skin, it plays a predominant role in suppressing caspase-dependent apoptosis in response to UV stress in a range of dermal cell types.</text>
</comment>
<comment type="catalytic activity">
    <reaction>
        <text>L-seryl-[protein] + ATP = O-phospho-L-seryl-[protein] + ADP + H(+)</text>
        <dbReference type="Rhea" id="RHEA:17989"/>
        <dbReference type="Rhea" id="RHEA-COMP:9863"/>
        <dbReference type="Rhea" id="RHEA-COMP:11604"/>
        <dbReference type="ChEBI" id="CHEBI:15378"/>
        <dbReference type="ChEBI" id="CHEBI:29999"/>
        <dbReference type="ChEBI" id="CHEBI:30616"/>
        <dbReference type="ChEBI" id="CHEBI:83421"/>
        <dbReference type="ChEBI" id="CHEBI:456216"/>
        <dbReference type="EC" id="2.7.12.1"/>
    </reaction>
</comment>
<comment type="catalytic activity">
    <reaction>
        <text>L-threonyl-[protein] + ATP = O-phospho-L-threonyl-[protein] + ADP + H(+)</text>
        <dbReference type="Rhea" id="RHEA:46608"/>
        <dbReference type="Rhea" id="RHEA-COMP:11060"/>
        <dbReference type="Rhea" id="RHEA-COMP:11605"/>
        <dbReference type="ChEBI" id="CHEBI:15378"/>
        <dbReference type="ChEBI" id="CHEBI:30013"/>
        <dbReference type="ChEBI" id="CHEBI:30616"/>
        <dbReference type="ChEBI" id="CHEBI:61977"/>
        <dbReference type="ChEBI" id="CHEBI:456216"/>
        <dbReference type="EC" id="2.7.12.1"/>
    </reaction>
</comment>
<comment type="catalytic activity">
    <reaction>
        <text>L-tyrosyl-[protein] + ATP = O-phospho-L-tyrosyl-[protein] + ADP + H(+)</text>
        <dbReference type="Rhea" id="RHEA:10596"/>
        <dbReference type="Rhea" id="RHEA-COMP:10136"/>
        <dbReference type="Rhea" id="RHEA-COMP:20101"/>
        <dbReference type="ChEBI" id="CHEBI:15378"/>
        <dbReference type="ChEBI" id="CHEBI:30616"/>
        <dbReference type="ChEBI" id="CHEBI:46858"/>
        <dbReference type="ChEBI" id="CHEBI:61978"/>
        <dbReference type="ChEBI" id="CHEBI:456216"/>
        <dbReference type="EC" id="2.7.12.1"/>
    </reaction>
</comment>
<comment type="subcellular location">
    <subcellularLocation>
        <location evidence="1">Cytoplasm</location>
    </subcellularLocation>
    <subcellularLocation>
        <location evidence="1">Cell membrane</location>
    </subcellularLocation>
    <subcellularLocation>
        <location evidence="1">Apical cell membrane</location>
    </subcellularLocation>
    <subcellularLocation>
        <location evidence="1">Basolateral cell membrane</location>
    </subcellularLocation>
    <subcellularLocation>
        <location evidence="1">Cell junction</location>
    </subcellularLocation>
    <text evidence="1">Detected in basolateral and apical membranes of all tubular epithelia. Detected at apical cell-cell junctions. Colocalized with FGF receptors to the cell membrane.</text>
</comment>
<comment type="similarity">
    <text evidence="4">Belongs to the protein kinase superfamily. Ser/Thr protein kinase family.</text>
</comment>
<reference key="1">
    <citation type="journal article" date="2006" name="Biochim. Biophys. Acta">
        <title>Dusty protein kinases: primary structure, gene evolution, tissue specific expression and unique features of the catalytic domain.</title>
        <authorList>
            <person name="Peng J."/>
            <person name="Dong W."/>
            <person name="Chen Y."/>
            <person name="Mo R."/>
            <person name="Cheng J.-F."/>
            <person name="Hui C.-C."/>
            <person name="Mohandas N."/>
            <person name="Huang C.-H."/>
        </authorList>
    </citation>
    <scope>NUCLEOTIDE SEQUENCE [MRNA]</scope>
</reference>
<organism>
    <name type="scientific">Canis lupus familiaris</name>
    <name type="common">Dog</name>
    <name type="synonym">Canis familiaris</name>
    <dbReference type="NCBI Taxonomy" id="9615"/>
    <lineage>
        <taxon>Eukaryota</taxon>
        <taxon>Metazoa</taxon>
        <taxon>Chordata</taxon>
        <taxon>Craniata</taxon>
        <taxon>Vertebrata</taxon>
        <taxon>Euteleostomi</taxon>
        <taxon>Mammalia</taxon>
        <taxon>Eutheria</taxon>
        <taxon>Laurasiatheria</taxon>
        <taxon>Carnivora</taxon>
        <taxon>Caniformia</taxon>
        <taxon>Canidae</taxon>
        <taxon>Canis</taxon>
    </lineage>
</organism>
<protein>
    <recommendedName>
        <fullName>Dual serine/threonine and tyrosine protein kinase</fullName>
        <ecNumber>2.7.12.1</ecNumber>
    </recommendedName>
    <alternativeName>
        <fullName>Dusty protein kinase</fullName>
        <shortName>Dusty PK</shortName>
    </alternativeName>
    <alternativeName>
        <fullName>Receptor-interacting serine/threonine-protein kinase 5</fullName>
    </alternativeName>
</protein>
<feature type="chain" id="PRO_0000233117" description="Dual serine/threonine and tyrosine protein kinase">
    <location>
        <begin position="1"/>
        <end position="931"/>
    </location>
</feature>
<feature type="domain" description="Protein kinase" evidence="4">
    <location>
        <begin position="654"/>
        <end position="908"/>
    </location>
</feature>
<feature type="region of interest" description="Disordered" evidence="6">
    <location>
        <begin position="1"/>
        <end position="24"/>
    </location>
</feature>
<feature type="coiled-coil region" evidence="3">
    <location>
        <begin position="397"/>
        <end position="424"/>
    </location>
</feature>
<feature type="active site" description="Proton acceptor" evidence="4 5">
    <location>
        <position position="779"/>
    </location>
</feature>
<feature type="binding site" evidence="4">
    <location>
        <begin position="660"/>
        <end position="668"/>
    </location>
    <ligand>
        <name>ATP</name>
        <dbReference type="ChEBI" id="CHEBI:30616"/>
    </ligand>
</feature>
<feature type="binding site" evidence="4">
    <location>
        <position position="683"/>
    </location>
    <ligand>
        <name>ATP</name>
        <dbReference type="ChEBI" id="CHEBI:30616"/>
    </ligand>
</feature>
<evidence type="ECO:0000250" key="1">
    <source>
        <dbReference type="UniProtKB" id="Q6XUX1"/>
    </source>
</evidence>
<evidence type="ECO:0000250" key="2">
    <source>
        <dbReference type="UniProtKB" id="Q6XUX3"/>
    </source>
</evidence>
<evidence type="ECO:0000255" key="3"/>
<evidence type="ECO:0000255" key="4">
    <source>
        <dbReference type="PROSITE-ProRule" id="PRU00159"/>
    </source>
</evidence>
<evidence type="ECO:0000255" key="5">
    <source>
        <dbReference type="PROSITE-ProRule" id="PRU10027"/>
    </source>
</evidence>
<evidence type="ECO:0000256" key="6">
    <source>
        <dbReference type="SAM" id="MobiDB-lite"/>
    </source>
</evidence>
<proteinExistence type="evidence at transcript level"/>